<gene>
    <name type="ordered locus">At3g58940</name>
    <name type="ORF">T20N10.290</name>
</gene>
<name>FBL60_ARATH</name>
<accession>Q9LXQ8</accession>
<keyword id="KW-0433">Leucine-rich repeat</keyword>
<keyword id="KW-1185">Reference proteome</keyword>
<keyword id="KW-0677">Repeat</keyword>
<feature type="chain" id="PRO_0000281961" description="F-box/LRR-repeat protein At3g58940">
    <location>
        <begin position="1"/>
        <end position="618"/>
    </location>
</feature>
<feature type="domain" description="F-box">
    <location>
        <begin position="1"/>
        <end position="47"/>
    </location>
</feature>
<feature type="repeat" description="LRR 1">
    <location>
        <begin position="147"/>
        <end position="176"/>
    </location>
</feature>
<feature type="repeat" description="LRR 2">
    <location>
        <begin position="196"/>
        <end position="223"/>
    </location>
</feature>
<feature type="repeat" description="LRR 3">
    <location>
        <begin position="224"/>
        <end position="249"/>
    </location>
</feature>
<feature type="repeat" description="LRR 4">
    <location>
        <begin position="282"/>
        <end position="313"/>
    </location>
</feature>
<feature type="repeat" description="LRR 5">
    <location>
        <begin position="314"/>
        <end position="339"/>
    </location>
</feature>
<feature type="repeat" description="LRR 6">
    <location>
        <begin position="354"/>
        <end position="379"/>
    </location>
</feature>
<feature type="region of interest" description="Disordered" evidence="1">
    <location>
        <begin position="587"/>
        <end position="618"/>
    </location>
</feature>
<feature type="compositionally biased region" description="Polar residues" evidence="1">
    <location>
        <begin position="595"/>
        <end position="609"/>
    </location>
</feature>
<dbReference type="EMBL" id="AL353032">
    <property type="protein sequence ID" value="CAB88311.1"/>
    <property type="molecule type" value="Genomic_DNA"/>
</dbReference>
<dbReference type="EMBL" id="CP002686">
    <property type="protein sequence ID" value="AEE79852.1"/>
    <property type="molecule type" value="Genomic_DNA"/>
</dbReference>
<dbReference type="EMBL" id="CP002686">
    <property type="protein sequence ID" value="ANM65663.1"/>
    <property type="molecule type" value="Genomic_DNA"/>
</dbReference>
<dbReference type="PIR" id="T49177">
    <property type="entry name" value="T49177"/>
</dbReference>
<dbReference type="RefSeq" id="NP_001327613.1">
    <property type="nucleotide sequence ID" value="NM_001339947.1"/>
</dbReference>
<dbReference type="RefSeq" id="NP_191453.1">
    <property type="nucleotide sequence ID" value="NM_115756.3"/>
</dbReference>
<dbReference type="BioGRID" id="10378">
    <property type="interactions" value="3"/>
</dbReference>
<dbReference type="FunCoup" id="Q9LXQ8">
    <property type="interactions" value="1067"/>
</dbReference>
<dbReference type="iPTMnet" id="Q9LXQ8"/>
<dbReference type="PaxDb" id="3702-AT3G58940.1"/>
<dbReference type="EnsemblPlants" id="AT3G58940.1">
    <property type="protein sequence ID" value="AT3G58940.1"/>
    <property type="gene ID" value="AT3G58940"/>
</dbReference>
<dbReference type="EnsemblPlants" id="AT3G58940.2">
    <property type="protein sequence ID" value="AT3G58940.2"/>
    <property type="gene ID" value="AT3G58940"/>
</dbReference>
<dbReference type="GeneID" id="825063"/>
<dbReference type="Gramene" id="AT3G58940.1">
    <property type="protein sequence ID" value="AT3G58940.1"/>
    <property type="gene ID" value="AT3G58940"/>
</dbReference>
<dbReference type="Gramene" id="AT3G58940.2">
    <property type="protein sequence ID" value="AT3G58940.2"/>
    <property type="gene ID" value="AT3G58940"/>
</dbReference>
<dbReference type="KEGG" id="ath:AT3G58940"/>
<dbReference type="Araport" id="AT3G58940"/>
<dbReference type="TAIR" id="AT3G58940"/>
<dbReference type="HOGENOM" id="CLU_010721_7_4_1"/>
<dbReference type="InParanoid" id="Q9LXQ8"/>
<dbReference type="OMA" id="YYELAPR"/>
<dbReference type="OrthoDB" id="1061657at2759"/>
<dbReference type="PhylomeDB" id="Q9LXQ8"/>
<dbReference type="PRO" id="PR:Q9LXQ8"/>
<dbReference type="Proteomes" id="UP000006548">
    <property type="component" value="Chromosome 3"/>
</dbReference>
<dbReference type="ExpressionAtlas" id="Q9LXQ8">
    <property type="expression patterns" value="baseline and differential"/>
</dbReference>
<dbReference type="CDD" id="cd22160">
    <property type="entry name" value="F-box_AtFBL13-like"/>
    <property type="match status" value="1"/>
</dbReference>
<dbReference type="Gene3D" id="3.80.10.10">
    <property type="entry name" value="Ribonuclease Inhibitor"/>
    <property type="match status" value="1"/>
</dbReference>
<dbReference type="InterPro" id="IPR036047">
    <property type="entry name" value="F-box-like_dom_sf"/>
</dbReference>
<dbReference type="InterPro" id="IPR053781">
    <property type="entry name" value="F-box_AtFBL13-like"/>
</dbReference>
<dbReference type="InterPro" id="IPR001810">
    <property type="entry name" value="F-box_dom"/>
</dbReference>
<dbReference type="InterPro" id="IPR006566">
    <property type="entry name" value="FBD"/>
</dbReference>
<dbReference type="InterPro" id="IPR055294">
    <property type="entry name" value="FBL60-like"/>
</dbReference>
<dbReference type="InterPro" id="IPR032675">
    <property type="entry name" value="LRR_dom_sf"/>
</dbReference>
<dbReference type="InterPro" id="IPR055411">
    <property type="entry name" value="LRR_FXL15/At3g58940/PEG3-like"/>
</dbReference>
<dbReference type="PANTHER" id="PTHR31293">
    <property type="entry name" value="RNI-LIKE SUPERFAMILY PROTEIN"/>
    <property type="match status" value="1"/>
</dbReference>
<dbReference type="PANTHER" id="PTHR31293:SF16">
    <property type="entry name" value="RNI-LIKE SUPERFAMILY PROTEIN"/>
    <property type="match status" value="1"/>
</dbReference>
<dbReference type="Pfam" id="PF00646">
    <property type="entry name" value="F-box"/>
    <property type="match status" value="1"/>
</dbReference>
<dbReference type="Pfam" id="PF24758">
    <property type="entry name" value="LRR_At5g56370"/>
    <property type="match status" value="1"/>
</dbReference>
<dbReference type="SMART" id="SM00579">
    <property type="entry name" value="FBD"/>
    <property type="match status" value="1"/>
</dbReference>
<dbReference type="SUPFAM" id="SSF81383">
    <property type="entry name" value="F-box domain"/>
    <property type="match status" value="1"/>
</dbReference>
<dbReference type="SUPFAM" id="SSF52047">
    <property type="entry name" value="RNI-like"/>
    <property type="match status" value="1"/>
</dbReference>
<evidence type="ECO:0000256" key="1">
    <source>
        <dbReference type="SAM" id="MobiDB-lite"/>
    </source>
</evidence>
<proteinExistence type="evidence at transcript level"/>
<protein>
    <recommendedName>
        <fullName>F-box/LRR-repeat protein At3g58940</fullName>
    </recommendedName>
</protein>
<organism>
    <name type="scientific">Arabidopsis thaliana</name>
    <name type="common">Mouse-ear cress</name>
    <dbReference type="NCBI Taxonomy" id="3702"/>
    <lineage>
        <taxon>Eukaryota</taxon>
        <taxon>Viridiplantae</taxon>
        <taxon>Streptophyta</taxon>
        <taxon>Embryophyta</taxon>
        <taxon>Tracheophyta</taxon>
        <taxon>Spermatophyta</taxon>
        <taxon>Magnoliopsida</taxon>
        <taxon>eudicotyledons</taxon>
        <taxon>Gunneridae</taxon>
        <taxon>Pentapetalae</taxon>
        <taxon>rosids</taxon>
        <taxon>malvids</taxon>
        <taxon>Brassicales</taxon>
        <taxon>Brassicaceae</taxon>
        <taxon>Camelineae</taxon>
        <taxon>Arabidopsis</taxon>
    </lineage>
</organism>
<sequence>MDRVSNLPEEVRCHILSFLPTKHAALTSVLSKSWLNLWKFETNLDIDDSDFLHPEEGKAERDEIRQSFVEFVDGVLALQGDSPIEKFSLKCITGIHPDHVNRWICNVLQRGVSDLYLFTDFSDEDTEEDGGYRLPQEMFVSRTLVKLKLRSEHCVNWWHWDIGASLPNLKSLNIDSDLIFFGEMEKFLSSFPVLEEVHMANMEWRELDETMSSASLTKLSIHGTGVEEFEHPKSISIDTPNLLYLNYSDLVAEDYPLDDEGDVVLQFCNVVKLINGIQNIQTLYLTEDTLEVLTMCCESMPVFNNLKTLGLKSDEGRGWQAVPALLRNCPHLEFLIIEGLLHSVTDKCGDACDCISREDKGRSLISCPVKKLEVRGFRGTIREKEMIRHFLEYFPCLDEMEIDAEENDSTNFEVPRILKVVAYRLHDVVSTEIVGHWQSSAQSGGWSQTQMDEMYYELAPRNKERIYDMFFFMRRASSTVPPPPPQEMSQDYLQMQLEVADLKERQRDQEAKLADLKERLRAMLDMIVDQNPIIASALRAREATNSEREKASSGQEMTEKERDYDALFDIIVEQNPMLASAVRALRATDSERAETSSNQEMTELGQATATYFPPREGE</sequence>
<reference key="1">
    <citation type="journal article" date="2000" name="Nature">
        <title>Sequence and analysis of chromosome 3 of the plant Arabidopsis thaliana.</title>
        <authorList>
            <person name="Salanoubat M."/>
            <person name="Lemcke K."/>
            <person name="Rieger M."/>
            <person name="Ansorge W."/>
            <person name="Unseld M."/>
            <person name="Fartmann B."/>
            <person name="Valle G."/>
            <person name="Bloecker H."/>
            <person name="Perez-Alonso M."/>
            <person name="Obermaier B."/>
            <person name="Delseny M."/>
            <person name="Boutry M."/>
            <person name="Grivell L.A."/>
            <person name="Mache R."/>
            <person name="Puigdomenech P."/>
            <person name="De Simone V."/>
            <person name="Choisne N."/>
            <person name="Artiguenave F."/>
            <person name="Robert C."/>
            <person name="Brottier P."/>
            <person name="Wincker P."/>
            <person name="Cattolico L."/>
            <person name="Weissenbach J."/>
            <person name="Saurin W."/>
            <person name="Quetier F."/>
            <person name="Schaefer M."/>
            <person name="Mueller-Auer S."/>
            <person name="Gabel C."/>
            <person name="Fuchs M."/>
            <person name="Benes V."/>
            <person name="Wurmbach E."/>
            <person name="Drzonek H."/>
            <person name="Erfle H."/>
            <person name="Jordan N."/>
            <person name="Bangert S."/>
            <person name="Wiedelmann R."/>
            <person name="Kranz H."/>
            <person name="Voss H."/>
            <person name="Holland R."/>
            <person name="Brandt P."/>
            <person name="Nyakatura G."/>
            <person name="Vezzi A."/>
            <person name="D'Angelo M."/>
            <person name="Pallavicini A."/>
            <person name="Toppo S."/>
            <person name="Simionati B."/>
            <person name="Conrad A."/>
            <person name="Hornischer K."/>
            <person name="Kauer G."/>
            <person name="Loehnert T.-H."/>
            <person name="Nordsiek G."/>
            <person name="Reichelt J."/>
            <person name="Scharfe M."/>
            <person name="Schoen O."/>
            <person name="Bargues M."/>
            <person name="Terol J."/>
            <person name="Climent J."/>
            <person name="Navarro P."/>
            <person name="Collado C."/>
            <person name="Perez-Perez A."/>
            <person name="Ottenwaelder B."/>
            <person name="Duchemin D."/>
            <person name="Cooke R."/>
            <person name="Laudie M."/>
            <person name="Berger-Llauro C."/>
            <person name="Purnelle B."/>
            <person name="Masuy D."/>
            <person name="de Haan M."/>
            <person name="Maarse A.C."/>
            <person name="Alcaraz J.-P."/>
            <person name="Cottet A."/>
            <person name="Casacuberta E."/>
            <person name="Monfort A."/>
            <person name="Argiriou A."/>
            <person name="Flores M."/>
            <person name="Liguori R."/>
            <person name="Vitale D."/>
            <person name="Mannhaupt G."/>
            <person name="Haase D."/>
            <person name="Schoof H."/>
            <person name="Rudd S."/>
            <person name="Zaccaria P."/>
            <person name="Mewes H.-W."/>
            <person name="Mayer K.F.X."/>
            <person name="Kaul S."/>
            <person name="Town C.D."/>
            <person name="Koo H.L."/>
            <person name="Tallon L.J."/>
            <person name="Jenkins J."/>
            <person name="Rooney T."/>
            <person name="Rizzo M."/>
            <person name="Walts A."/>
            <person name="Utterback T."/>
            <person name="Fujii C.Y."/>
            <person name="Shea T.P."/>
            <person name="Creasy T.H."/>
            <person name="Haas B."/>
            <person name="Maiti R."/>
            <person name="Wu D."/>
            <person name="Peterson J."/>
            <person name="Van Aken S."/>
            <person name="Pai G."/>
            <person name="Militscher J."/>
            <person name="Sellers P."/>
            <person name="Gill J.E."/>
            <person name="Feldblyum T.V."/>
            <person name="Preuss D."/>
            <person name="Lin X."/>
            <person name="Nierman W.C."/>
            <person name="Salzberg S.L."/>
            <person name="White O."/>
            <person name="Venter J.C."/>
            <person name="Fraser C.M."/>
            <person name="Kaneko T."/>
            <person name="Nakamura Y."/>
            <person name="Sato S."/>
            <person name="Kato T."/>
            <person name="Asamizu E."/>
            <person name="Sasamoto S."/>
            <person name="Kimura T."/>
            <person name="Idesawa K."/>
            <person name="Kawashima K."/>
            <person name="Kishida Y."/>
            <person name="Kiyokawa C."/>
            <person name="Kohara M."/>
            <person name="Matsumoto M."/>
            <person name="Matsuno A."/>
            <person name="Muraki A."/>
            <person name="Nakayama S."/>
            <person name="Nakazaki N."/>
            <person name="Shinpo S."/>
            <person name="Takeuchi C."/>
            <person name="Wada T."/>
            <person name="Watanabe A."/>
            <person name="Yamada M."/>
            <person name="Yasuda M."/>
            <person name="Tabata S."/>
        </authorList>
    </citation>
    <scope>NUCLEOTIDE SEQUENCE [LARGE SCALE GENOMIC DNA]</scope>
    <source>
        <strain>cv. Columbia</strain>
    </source>
</reference>
<reference key="2">
    <citation type="journal article" date="2017" name="Plant J.">
        <title>Araport11: a complete reannotation of the Arabidopsis thaliana reference genome.</title>
        <authorList>
            <person name="Cheng C.Y."/>
            <person name="Krishnakumar V."/>
            <person name="Chan A.P."/>
            <person name="Thibaud-Nissen F."/>
            <person name="Schobel S."/>
            <person name="Town C.D."/>
        </authorList>
    </citation>
    <scope>GENOME REANNOTATION</scope>
    <source>
        <strain>cv. Columbia</strain>
    </source>
</reference>